<gene>
    <name evidence="17" type="primary">CCC2</name>
    <name type="ordered locus">YDR270W</name>
    <name type="ORF">D9954.6</name>
</gene>
<dbReference type="EC" id="7.2.2.8" evidence="2"/>
<dbReference type="EMBL" id="L36317">
    <property type="protein sequence ID" value="AAC37425.1"/>
    <property type="molecule type" value="Genomic_DNA"/>
</dbReference>
<dbReference type="EMBL" id="U51030">
    <property type="protein sequence ID" value="AAB64451.1"/>
    <property type="molecule type" value="Genomic_DNA"/>
</dbReference>
<dbReference type="EMBL" id="BK006938">
    <property type="protein sequence ID" value="DAA12113.1"/>
    <property type="molecule type" value="Genomic_DNA"/>
</dbReference>
<dbReference type="PIR" id="S55353">
    <property type="entry name" value="S55353"/>
</dbReference>
<dbReference type="RefSeq" id="NP_010556.1">
    <property type="nucleotide sequence ID" value="NM_001180578.1"/>
</dbReference>
<dbReference type="PDB" id="1FVQ">
    <property type="method" value="NMR"/>
    <property type="chains" value="A=2-72"/>
</dbReference>
<dbReference type="PDB" id="1FVS">
    <property type="method" value="NMR"/>
    <property type="chains" value="A=2-72"/>
</dbReference>
<dbReference type="PDB" id="2GGP">
    <property type="method" value="NMR"/>
    <property type="chains" value="B=2-72"/>
</dbReference>
<dbReference type="PDBsum" id="1FVQ"/>
<dbReference type="PDBsum" id="1FVS"/>
<dbReference type="PDBsum" id="2GGP"/>
<dbReference type="SMR" id="P38995"/>
<dbReference type="BioGRID" id="32325">
    <property type="interactions" value="103"/>
</dbReference>
<dbReference type="DIP" id="DIP-906N"/>
<dbReference type="FunCoup" id="P38995">
    <property type="interactions" value="604"/>
</dbReference>
<dbReference type="IntAct" id="P38995">
    <property type="interactions" value="28"/>
</dbReference>
<dbReference type="MINT" id="P38995"/>
<dbReference type="STRING" id="4932.YDR270W"/>
<dbReference type="TCDB" id="3.A.3.5.17">
    <property type="family name" value="the p-type atpase (p-atpase) superfamily"/>
</dbReference>
<dbReference type="iPTMnet" id="P38995"/>
<dbReference type="PaxDb" id="4932-YDR270W"/>
<dbReference type="PeptideAtlas" id="P38995"/>
<dbReference type="EnsemblFungi" id="YDR270W_mRNA">
    <property type="protein sequence ID" value="YDR270W"/>
    <property type="gene ID" value="YDR270W"/>
</dbReference>
<dbReference type="GeneID" id="851862"/>
<dbReference type="KEGG" id="sce:YDR270W"/>
<dbReference type="AGR" id="SGD:S000002678"/>
<dbReference type="SGD" id="S000002678">
    <property type="gene designation" value="CCC2"/>
</dbReference>
<dbReference type="VEuPathDB" id="FungiDB:YDR270W"/>
<dbReference type="eggNOG" id="KOG0207">
    <property type="taxonomic scope" value="Eukaryota"/>
</dbReference>
<dbReference type="GeneTree" id="ENSGT00940000174979"/>
<dbReference type="HOGENOM" id="CLU_001771_0_1_1"/>
<dbReference type="InParanoid" id="P38995"/>
<dbReference type="OMA" id="HWMLPAW"/>
<dbReference type="OrthoDB" id="432719at2759"/>
<dbReference type="BioCyc" id="YEAST:G3O-29839-MONOMER"/>
<dbReference type="BRENDA" id="7.2.2.9">
    <property type="organism ID" value="984"/>
</dbReference>
<dbReference type="Reactome" id="R-SCE-936837">
    <property type="pathway name" value="Ion transport by P-type ATPases"/>
</dbReference>
<dbReference type="BioGRID-ORCS" id="851862">
    <property type="hits" value="2 hits in 10 CRISPR screens"/>
</dbReference>
<dbReference type="EvolutionaryTrace" id="P38995"/>
<dbReference type="PRO" id="PR:P38995"/>
<dbReference type="Proteomes" id="UP000002311">
    <property type="component" value="Chromosome IV"/>
</dbReference>
<dbReference type="RNAct" id="P38995">
    <property type="molecule type" value="protein"/>
</dbReference>
<dbReference type="GO" id="GO:0005794">
    <property type="term" value="C:Golgi apparatus"/>
    <property type="evidence" value="ECO:0007669"/>
    <property type="project" value="UniProtKB-SubCell"/>
</dbReference>
<dbReference type="GO" id="GO:0016020">
    <property type="term" value="C:membrane"/>
    <property type="evidence" value="ECO:0000318"/>
    <property type="project" value="GO_Central"/>
</dbReference>
<dbReference type="GO" id="GO:0012510">
    <property type="term" value="C:trans-Golgi network transport vesicle membrane"/>
    <property type="evidence" value="ECO:0000314"/>
    <property type="project" value="SGD"/>
</dbReference>
<dbReference type="GO" id="GO:0005524">
    <property type="term" value="F:ATP binding"/>
    <property type="evidence" value="ECO:0007669"/>
    <property type="project" value="UniProtKB-KW"/>
</dbReference>
<dbReference type="GO" id="GO:0016887">
    <property type="term" value="F:ATP hydrolysis activity"/>
    <property type="evidence" value="ECO:0007669"/>
    <property type="project" value="InterPro"/>
</dbReference>
<dbReference type="GO" id="GO:0019829">
    <property type="term" value="F:ATPase-coupled monoatomic cation transmembrane transporter activity"/>
    <property type="evidence" value="ECO:0000314"/>
    <property type="project" value="SGD"/>
</dbReference>
<dbReference type="GO" id="GO:0005507">
    <property type="term" value="F:copper ion binding"/>
    <property type="evidence" value="ECO:0000314"/>
    <property type="project" value="SGD"/>
</dbReference>
<dbReference type="GO" id="GO:0043682">
    <property type="term" value="F:P-type divalent copper transporter activity"/>
    <property type="evidence" value="ECO:0000318"/>
    <property type="project" value="GO_Central"/>
</dbReference>
<dbReference type="GO" id="GO:0140581">
    <property type="term" value="F:P-type monovalent copper transporter activity"/>
    <property type="evidence" value="ECO:0007669"/>
    <property type="project" value="UniProtKB-EC"/>
</dbReference>
<dbReference type="GO" id="GO:0060003">
    <property type="term" value="P:copper ion export"/>
    <property type="evidence" value="ECO:0000315"/>
    <property type="project" value="SGD"/>
</dbReference>
<dbReference type="GO" id="GO:0055070">
    <property type="term" value="P:copper ion homeostasis"/>
    <property type="evidence" value="ECO:0000318"/>
    <property type="project" value="GO_Central"/>
</dbReference>
<dbReference type="GO" id="GO:0006825">
    <property type="term" value="P:copper ion transport"/>
    <property type="evidence" value="ECO:0000316"/>
    <property type="project" value="UniProtKB"/>
</dbReference>
<dbReference type="GO" id="GO:0006879">
    <property type="term" value="P:intracellular iron ion homeostasis"/>
    <property type="evidence" value="ECO:0000315"/>
    <property type="project" value="SGD"/>
</dbReference>
<dbReference type="GO" id="GO:0055085">
    <property type="term" value="P:transmembrane transport"/>
    <property type="evidence" value="ECO:0000315"/>
    <property type="project" value="SGD"/>
</dbReference>
<dbReference type="CDD" id="cd00371">
    <property type="entry name" value="HMA"/>
    <property type="match status" value="2"/>
</dbReference>
<dbReference type="CDD" id="cd02094">
    <property type="entry name" value="P-type_ATPase_Cu-like"/>
    <property type="match status" value="1"/>
</dbReference>
<dbReference type="FunFam" id="3.30.70.100:FF:000001">
    <property type="entry name" value="ATPase copper transporting beta"/>
    <property type="match status" value="1"/>
</dbReference>
<dbReference type="FunFam" id="2.70.150.10:FF:000002">
    <property type="entry name" value="Copper-transporting ATPase 1, putative"/>
    <property type="match status" value="1"/>
</dbReference>
<dbReference type="FunFam" id="3.30.70.100:FF:000043">
    <property type="entry name" value="Copper-transporting ATPase 2"/>
    <property type="match status" value="1"/>
</dbReference>
<dbReference type="Gene3D" id="3.30.70.100">
    <property type="match status" value="2"/>
</dbReference>
<dbReference type="Gene3D" id="3.40.1110.10">
    <property type="entry name" value="Calcium-transporting ATPase, cytoplasmic domain N"/>
    <property type="match status" value="1"/>
</dbReference>
<dbReference type="Gene3D" id="2.70.150.10">
    <property type="entry name" value="Calcium-transporting ATPase, cytoplasmic transduction domain A"/>
    <property type="match status" value="1"/>
</dbReference>
<dbReference type="Gene3D" id="3.40.50.1000">
    <property type="entry name" value="HAD superfamily/HAD-like"/>
    <property type="match status" value="1"/>
</dbReference>
<dbReference type="InterPro" id="IPR023299">
    <property type="entry name" value="ATPase_P-typ_cyto_dom_N"/>
</dbReference>
<dbReference type="InterPro" id="IPR018303">
    <property type="entry name" value="ATPase_P-typ_P_site"/>
</dbReference>
<dbReference type="InterPro" id="IPR023298">
    <property type="entry name" value="ATPase_P-typ_TM_dom_sf"/>
</dbReference>
<dbReference type="InterPro" id="IPR008250">
    <property type="entry name" value="ATPase_P-typ_transduc_dom_A_sf"/>
</dbReference>
<dbReference type="InterPro" id="IPR036412">
    <property type="entry name" value="HAD-like_sf"/>
</dbReference>
<dbReference type="InterPro" id="IPR023214">
    <property type="entry name" value="HAD_sf"/>
</dbReference>
<dbReference type="InterPro" id="IPR017969">
    <property type="entry name" value="Heavy-metal-associated_CS"/>
</dbReference>
<dbReference type="InterPro" id="IPR006122">
    <property type="entry name" value="HMA_Cu_ion-bd"/>
</dbReference>
<dbReference type="InterPro" id="IPR006121">
    <property type="entry name" value="HMA_dom"/>
</dbReference>
<dbReference type="InterPro" id="IPR036163">
    <property type="entry name" value="HMA_dom_sf"/>
</dbReference>
<dbReference type="InterPro" id="IPR027256">
    <property type="entry name" value="P-typ_ATPase_IB"/>
</dbReference>
<dbReference type="InterPro" id="IPR001757">
    <property type="entry name" value="P_typ_ATPase"/>
</dbReference>
<dbReference type="InterPro" id="IPR044492">
    <property type="entry name" value="P_typ_ATPase_HD_dom"/>
</dbReference>
<dbReference type="NCBIfam" id="TIGR01525">
    <property type="entry name" value="ATPase-IB_hvy"/>
    <property type="match status" value="1"/>
</dbReference>
<dbReference type="NCBIfam" id="TIGR01494">
    <property type="entry name" value="ATPase_P-type"/>
    <property type="match status" value="2"/>
</dbReference>
<dbReference type="NCBIfam" id="TIGR00003">
    <property type="entry name" value="copper ion binding protein"/>
    <property type="match status" value="2"/>
</dbReference>
<dbReference type="PANTHER" id="PTHR43520">
    <property type="entry name" value="ATP7, ISOFORM B"/>
    <property type="match status" value="1"/>
</dbReference>
<dbReference type="PANTHER" id="PTHR43520:SF8">
    <property type="entry name" value="P-TYPE CU(+) TRANSPORTER"/>
    <property type="match status" value="1"/>
</dbReference>
<dbReference type="Pfam" id="PF00122">
    <property type="entry name" value="E1-E2_ATPase"/>
    <property type="match status" value="1"/>
</dbReference>
<dbReference type="Pfam" id="PF00403">
    <property type="entry name" value="HMA"/>
    <property type="match status" value="2"/>
</dbReference>
<dbReference type="Pfam" id="PF00702">
    <property type="entry name" value="Hydrolase"/>
    <property type="match status" value="1"/>
</dbReference>
<dbReference type="PRINTS" id="PR00119">
    <property type="entry name" value="CATATPASE"/>
</dbReference>
<dbReference type="SFLD" id="SFLDS00003">
    <property type="entry name" value="Haloacid_Dehalogenase"/>
    <property type="match status" value="1"/>
</dbReference>
<dbReference type="SFLD" id="SFLDF00027">
    <property type="entry name" value="p-type_atpase"/>
    <property type="match status" value="1"/>
</dbReference>
<dbReference type="SUPFAM" id="SSF81653">
    <property type="entry name" value="Calcium ATPase, transduction domain A"/>
    <property type="match status" value="1"/>
</dbReference>
<dbReference type="SUPFAM" id="SSF81665">
    <property type="entry name" value="Calcium ATPase, transmembrane domain M"/>
    <property type="match status" value="1"/>
</dbReference>
<dbReference type="SUPFAM" id="SSF56784">
    <property type="entry name" value="HAD-like"/>
    <property type="match status" value="1"/>
</dbReference>
<dbReference type="SUPFAM" id="SSF55008">
    <property type="entry name" value="HMA, heavy metal-associated domain"/>
    <property type="match status" value="2"/>
</dbReference>
<dbReference type="PROSITE" id="PS00154">
    <property type="entry name" value="ATPASE_E1_E2"/>
    <property type="match status" value="1"/>
</dbReference>
<dbReference type="PROSITE" id="PS01047">
    <property type="entry name" value="HMA_1"/>
    <property type="match status" value="2"/>
</dbReference>
<dbReference type="PROSITE" id="PS50846">
    <property type="entry name" value="HMA_2"/>
    <property type="match status" value="2"/>
</dbReference>
<protein>
    <recommendedName>
        <fullName evidence="17">Copper-transporting ATPase</fullName>
        <ecNumber evidence="2">7.2.2.8</ecNumber>
    </recommendedName>
    <alternativeName>
        <fullName evidence="17">Cu(2+)-ATPase</fullName>
    </alternativeName>
</protein>
<organism>
    <name type="scientific">Saccharomyces cerevisiae (strain ATCC 204508 / S288c)</name>
    <name type="common">Baker's yeast</name>
    <dbReference type="NCBI Taxonomy" id="559292"/>
    <lineage>
        <taxon>Eukaryota</taxon>
        <taxon>Fungi</taxon>
        <taxon>Dikarya</taxon>
        <taxon>Ascomycota</taxon>
        <taxon>Saccharomycotina</taxon>
        <taxon>Saccharomycetes</taxon>
        <taxon>Saccharomycetales</taxon>
        <taxon>Saccharomycetaceae</taxon>
        <taxon>Saccharomyces</taxon>
    </lineage>
</organism>
<reference key="1">
    <citation type="journal article" date="1995" name="Yeast">
        <title>Sequence, mapping and disruption of CCC2, a gene that cross-complements the Ca(2+)-sensitive phenotype of csg1 mutants and encodes a P-type ATPase belonging to the Cu(2+)-ATPase subfamily.</title>
        <authorList>
            <person name="Fu D."/>
            <person name="Beeler T.J."/>
            <person name="Dunn T.M."/>
        </authorList>
    </citation>
    <scope>NUCLEOTIDE SEQUENCE [GENOMIC DNA]</scope>
    <scope>FUNCTION</scope>
    <scope>DISRUPTION PHENOTYPE</scope>
</reference>
<reference key="2">
    <citation type="journal article" date="1997" name="Nature">
        <title>The nucleotide sequence of Saccharomyces cerevisiae chromosome IV.</title>
        <authorList>
            <person name="Jacq C."/>
            <person name="Alt-Moerbe J."/>
            <person name="Andre B."/>
            <person name="Arnold W."/>
            <person name="Bahr A."/>
            <person name="Ballesta J.P.G."/>
            <person name="Bargues M."/>
            <person name="Baron L."/>
            <person name="Becker A."/>
            <person name="Biteau N."/>
            <person name="Bloecker H."/>
            <person name="Blugeon C."/>
            <person name="Boskovic J."/>
            <person name="Brandt P."/>
            <person name="Brueckner M."/>
            <person name="Buitrago M.J."/>
            <person name="Coster F."/>
            <person name="Delaveau T."/>
            <person name="del Rey F."/>
            <person name="Dujon B."/>
            <person name="Eide L.G."/>
            <person name="Garcia-Cantalejo J.M."/>
            <person name="Goffeau A."/>
            <person name="Gomez-Peris A."/>
            <person name="Granotier C."/>
            <person name="Hanemann V."/>
            <person name="Hankeln T."/>
            <person name="Hoheisel J.D."/>
            <person name="Jaeger W."/>
            <person name="Jimenez A."/>
            <person name="Jonniaux J.-L."/>
            <person name="Kraemer C."/>
            <person name="Kuester H."/>
            <person name="Laamanen P."/>
            <person name="Legros Y."/>
            <person name="Louis E.J."/>
            <person name="Moeller-Rieker S."/>
            <person name="Monnet A."/>
            <person name="Moro M."/>
            <person name="Mueller-Auer S."/>
            <person name="Nussbaumer B."/>
            <person name="Paricio N."/>
            <person name="Paulin L."/>
            <person name="Perea J."/>
            <person name="Perez-Alonso M."/>
            <person name="Perez-Ortin J.E."/>
            <person name="Pohl T.M."/>
            <person name="Prydz H."/>
            <person name="Purnelle B."/>
            <person name="Rasmussen S.W."/>
            <person name="Remacha M.A."/>
            <person name="Revuelta J.L."/>
            <person name="Rieger M."/>
            <person name="Salom D."/>
            <person name="Saluz H.P."/>
            <person name="Saiz J.E."/>
            <person name="Saren A.-M."/>
            <person name="Schaefer M."/>
            <person name="Scharfe M."/>
            <person name="Schmidt E.R."/>
            <person name="Schneider C."/>
            <person name="Scholler P."/>
            <person name="Schwarz S."/>
            <person name="Soler-Mira A."/>
            <person name="Urrestarazu L.A."/>
            <person name="Verhasselt P."/>
            <person name="Vissers S."/>
            <person name="Voet M."/>
            <person name="Volckaert G."/>
            <person name="Wagner G."/>
            <person name="Wambutt R."/>
            <person name="Wedler E."/>
            <person name="Wedler H."/>
            <person name="Woelfl S."/>
            <person name="Harris D.E."/>
            <person name="Bowman S."/>
            <person name="Brown D."/>
            <person name="Churcher C.M."/>
            <person name="Connor R."/>
            <person name="Dedman K."/>
            <person name="Gentles S."/>
            <person name="Hamlin N."/>
            <person name="Hunt S."/>
            <person name="Jones L."/>
            <person name="McDonald S."/>
            <person name="Murphy L.D."/>
            <person name="Niblett D."/>
            <person name="Odell C."/>
            <person name="Oliver K."/>
            <person name="Rajandream M.A."/>
            <person name="Richards C."/>
            <person name="Shore L."/>
            <person name="Walsh S.V."/>
            <person name="Barrell B.G."/>
            <person name="Dietrich F.S."/>
            <person name="Mulligan J.T."/>
            <person name="Allen E."/>
            <person name="Araujo R."/>
            <person name="Aviles E."/>
            <person name="Berno A."/>
            <person name="Carpenter J."/>
            <person name="Chen E."/>
            <person name="Cherry J.M."/>
            <person name="Chung E."/>
            <person name="Duncan M."/>
            <person name="Hunicke-Smith S."/>
            <person name="Hyman R.W."/>
            <person name="Komp C."/>
            <person name="Lashkari D."/>
            <person name="Lew H."/>
            <person name="Lin D."/>
            <person name="Mosedale D."/>
            <person name="Nakahara K."/>
            <person name="Namath A."/>
            <person name="Oefner P."/>
            <person name="Oh C."/>
            <person name="Petel F.X."/>
            <person name="Roberts D."/>
            <person name="Schramm S."/>
            <person name="Schroeder M."/>
            <person name="Shogren T."/>
            <person name="Shroff N."/>
            <person name="Winant A."/>
            <person name="Yelton M.A."/>
            <person name="Botstein D."/>
            <person name="Davis R.W."/>
            <person name="Johnston M."/>
            <person name="Andrews S."/>
            <person name="Brinkman R."/>
            <person name="Cooper J."/>
            <person name="Ding H."/>
            <person name="Du Z."/>
            <person name="Favello A."/>
            <person name="Fulton L."/>
            <person name="Gattung S."/>
            <person name="Greco T."/>
            <person name="Hallsworth K."/>
            <person name="Hawkins J."/>
            <person name="Hillier L.W."/>
            <person name="Jier M."/>
            <person name="Johnson D."/>
            <person name="Johnston L."/>
            <person name="Kirsten J."/>
            <person name="Kucaba T."/>
            <person name="Langston Y."/>
            <person name="Latreille P."/>
            <person name="Le T."/>
            <person name="Mardis E."/>
            <person name="Menezes S."/>
            <person name="Miller N."/>
            <person name="Nhan M."/>
            <person name="Pauley A."/>
            <person name="Peluso D."/>
            <person name="Rifkin L."/>
            <person name="Riles L."/>
            <person name="Taich A."/>
            <person name="Trevaskis E."/>
            <person name="Vignati D."/>
            <person name="Wilcox L."/>
            <person name="Wohldman P."/>
            <person name="Vaudin M."/>
            <person name="Wilson R."/>
            <person name="Waterston R."/>
            <person name="Albermann K."/>
            <person name="Hani J."/>
            <person name="Heumann K."/>
            <person name="Kleine K."/>
            <person name="Mewes H.-W."/>
            <person name="Zollner A."/>
            <person name="Zaccaria P."/>
        </authorList>
    </citation>
    <scope>NUCLEOTIDE SEQUENCE [LARGE SCALE GENOMIC DNA]</scope>
    <source>
        <strain>ATCC 204508 / S288c</strain>
    </source>
</reference>
<reference key="3">
    <citation type="journal article" date="2014" name="G3 (Bethesda)">
        <title>The reference genome sequence of Saccharomyces cerevisiae: Then and now.</title>
        <authorList>
            <person name="Engel S.R."/>
            <person name="Dietrich F.S."/>
            <person name="Fisk D.G."/>
            <person name="Binkley G."/>
            <person name="Balakrishnan R."/>
            <person name="Costanzo M.C."/>
            <person name="Dwight S.S."/>
            <person name="Hitz B.C."/>
            <person name="Karra K."/>
            <person name="Nash R.S."/>
            <person name="Weng S."/>
            <person name="Wong E.D."/>
            <person name="Lloyd P."/>
            <person name="Skrzypek M.S."/>
            <person name="Miyasato S.R."/>
            <person name="Simison M."/>
            <person name="Cherry J.M."/>
        </authorList>
    </citation>
    <scope>GENOME REANNOTATION</scope>
    <source>
        <strain>ATCC 204508 / S288c</strain>
    </source>
</reference>
<reference key="4">
    <citation type="journal article" date="1995" name="Proc. Natl. Acad. Sci. U.S.A.">
        <title>The Menkes/Wilson disease gene homologue in yeast provides copper to a ceruloplasmin-like oxidase required for iron uptake.</title>
        <authorList>
            <person name="Yuan D.S."/>
            <person name="Stearman R."/>
            <person name="Dancis A."/>
            <person name="Dunn T."/>
            <person name="Beeler T."/>
            <person name="Klausner R.D."/>
        </authorList>
    </citation>
    <scope>FUNCTION</scope>
    <scope>DISRUPTION PHENOTYPE</scope>
</reference>
<reference key="5">
    <citation type="journal article" date="1996" name="EMBO J.">
        <title>Iron-regulated DNA binding by the AFT1 protein controls the iron regulon in yeast.</title>
        <authorList>
            <person name="Yamaguchi-Iwai Y."/>
            <person name="Stearman R."/>
            <person name="Dancis A."/>
            <person name="Klausner R.D."/>
        </authorList>
    </citation>
    <scope>INDUCTION</scope>
</reference>
<reference key="6">
    <citation type="journal article" date="1997" name="J. Biol. Chem.">
        <title>A role for the Saccharomyces cerevisiae ATX1 gene in copper trafficking and iron transport.</title>
        <authorList>
            <person name="Lin S.J."/>
            <person name="Pufahl R.A."/>
            <person name="Dancis A."/>
            <person name="O'Halloran T.V."/>
            <person name="Culotta V.C."/>
        </authorList>
    </citation>
    <scope>FUNCTION</scope>
    <scope>DISRUPTION PHENOTYPE</scope>
</reference>
<reference key="7">
    <citation type="journal article" date="1997" name="J. Biol. Chem.">
        <title>Restriction of copper export in Saccharomyces cerevisiae to a late Golgi or post-Golgi compartment in the secretory pathway.</title>
        <authorList>
            <person name="Yuan D.S."/>
            <person name="Dancis A."/>
            <person name="Klausner R.D."/>
        </authorList>
    </citation>
    <scope>FUNCTION</scope>
    <scope>SUBCELLULAR LOCATION</scope>
</reference>
<reference key="8">
    <citation type="journal article" date="1997" name="Mol. Gen. Genet.">
        <title>SUR1 (CSG1/BCL21), a gene necessary for growth of Saccharomyces cerevisiae in the presence of high Ca2+ concentrations at 37 degrees C, is required for mannosylation of inositolphosphorylceramide.</title>
        <authorList>
            <person name="Beeler T.J."/>
            <person name="Fu D."/>
            <person name="Rivera J."/>
            <person name="Monaghan E."/>
            <person name="Gable K."/>
            <person name="Dunn T.M."/>
        </authorList>
    </citation>
    <scope>FUNCTION</scope>
    <scope>DISRUPTION PHENOTYPE</scope>
</reference>
<reference key="9">
    <citation type="journal article" date="1997" name="Science">
        <title>Metal ion chaperone function of the soluble Cu(I) receptor Atx1.</title>
        <authorList>
            <person name="Pufahl R.A."/>
            <person name="Singer C.P."/>
            <person name="Peariso K.L."/>
            <person name="Lin S.J."/>
            <person name="Schmidt P.J."/>
            <person name="Fahrni C.J."/>
            <person name="Culotta V.C."/>
            <person name="Penner-Hahn J.E."/>
            <person name="O'Halloran T.V."/>
        </authorList>
    </citation>
    <scope>FUNCTION</scope>
</reference>
<reference key="10">
    <citation type="journal article" date="1998" name="Proc. Natl. Acad. Sci. U.S.A.">
        <title>The yeast CLC chloride channel functions in cation homeostasis.</title>
        <authorList>
            <person name="Gaxiola R.A."/>
            <person name="Yuan D.S."/>
            <person name="Klausner R.D."/>
            <person name="Fink G.R."/>
        </authorList>
    </citation>
    <scope>FUNCTION</scope>
    <scope>DISRUPTION PHENOTYPE</scope>
    <scope>SUBCELLULAR LOCATION</scope>
</reference>
<reference key="11">
    <citation type="journal article" date="2001" name="J. Biol. Chem.">
        <title>Characterization of the binding interface between the copper chaperone Atx1 and the first cytosolic domain of Ccc2 ATPase.</title>
        <authorList>
            <person name="Arnesano F."/>
            <person name="Banci L."/>
            <person name="Bertini I."/>
            <person name="Cantini F."/>
            <person name="Ciofi-Baffoni S."/>
            <person name="Huffman D.L."/>
            <person name="O'Halloran T.V."/>
        </authorList>
    </citation>
    <scope>METAL-BINDING SITES</scope>
</reference>
<reference key="12">
    <citation type="journal article" date="2001" name="Biochemistry">
        <title>Solution structure of the Cu(I) and apo forms of the yeast metallochaperone, Atx1.</title>
        <authorList>
            <person name="Arnesano F."/>
            <person name="Banci L."/>
            <person name="Bertini I."/>
            <person name="Huffman D.L."/>
            <person name="O'Halloran T.V."/>
        </authorList>
    </citation>
    <scope>FUNCTION</scope>
</reference>
<reference key="13">
    <citation type="journal article" date="2004" name="J. Biol. Chem.">
        <title>Copper and iron are the limiting factors for growth of the yeast Saccharomyces cerevisiae in an alkaline environment.</title>
        <authorList>
            <person name="Serrano R."/>
            <person name="Bernal D."/>
            <person name="Simon E."/>
            <person name="Arino J."/>
        </authorList>
    </citation>
    <scope>FUNCTION</scope>
    <scope>DISRUPTION PHENOTYPE</scope>
</reference>
<reference evidence="19 20" key="14">
    <citation type="journal article" date="2001" name="J. Biol. Chem.">
        <title>Solution structure of the yeast copper transporter domain Ccc2a in the apo and Cu(I)-loaded states.</title>
        <authorList>
            <person name="Banci L."/>
            <person name="Bertini I."/>
            <person name="Ciofi-Baffoni S."/>
            <person name="Huffman D.L."/>
            <person name="O'Halloran T.V."/>
        </authorList>
    </citation>
    <scope>STRUCTURE BY NMR OF 1-72 IN APO AND COPPER-BOUND FORMS</scope>
</reference>
<reference evidence="21" key="15">
    <citation type="journal article" date="2006" name="Nat. Chem. Biol.">
        <title>The Atx1-Ccc2 complex is a metal-mediated protein-protein interaction.</title>
        <authorList>
            <person name="Banci L."/>
            <person name="Bertini I."/>
            <person name="Cantini F."/>
            <person name="Felli I.C."/>
            <person name="Gonnelli L."/>
            <person name="Hadjiliadis N."/>
            <person name="Pierattelli R."/>
            <person name="Rosato A."/>
            <person name="Voulgaris P."/>
        </authorList>
    </citation>
    <scope>STRUCTURE BY NMR OF 2-72</scope>
    <scope>FUNCTION</scope>
    <scope>INTERACTION WITH ATX1</scope>
</reference>
<proteinExistence type="evidence at protein level"/>
<comment type="function">
    <text evidence="6 7 8 9 10 12 13 14 15 16">Copper-transporting P-type ATPase necessary for the proper uptake of iron (PubMed:7785328). Required for export of copper from cytosol into extracytosolic compartment (PubMed:11327811, PubMed:16732294, PubMed:9083054, PubMed:9346482). Retrieves copper from the metallochaperone ATX1 and incorporates it into trans-Golgi vesicles where they are acquired by the cell-surface iron transporter FET3 (PubMed:11327811, PubMed:14993228, PubMed:16732294, PubMed:7708696, PubMed:9083054, PubMed:9325307, PubMed:9346482, PubMed:9520490). Required the production of inositolphosphorylceramide D, probably by delivering copper to a yet to be identified enzyme (PubMed:9323360).</text>
</comment>
<comment type="catalytic activity">
    <reaction evidence="2">
        <text>Cu(+)(in) + ATP + H2O = Cu(+)(out) + ADP + phosphate + H(+)</text>
        <dbReference type="Rhea" id="RHEA:25792"/>
        <dbReference type="ChEBI" id="CHEBI:15377"/>
        <dbReference type="ChEBI" id="CHEBI:15378"/>
        <dbReference type="ChEBI" id="CHEBI:30616"/>
        <dbReference type="ChEBI" id="CHEBI:43474"/>
        <dbReference type="ChEBI" id="CHEBI:49552"/>
        <dbReference type="ChEBI" id="CHEBI:456216"/>
        <dbReference type="EC" id="7.2.2.8"/>
    </reaction>
</comment>
<comment type="subunit">
    <text evidence="8">Interacts with the copper chaperone ATX1 via the copper anion.</text>
</comment>
<comment type="subcellular location">
    <subcellularLocation>
        <location evidence="14 16">Golgi apparatus</location>
        <location evidence="14 16">trans-Golgi network membrane</location>
        <topology evidence="3">Multi-pass membrane protein</topology>
    </subcellularLocation>
</comment>
<comment type="induction">
    <text evidence="11">Expression is induced by the iron-sensing trans-activator AFT1.</text>
</comment>
<comment type="disruption phenotype">
    <text evidence="7 9 12 13 16">Impairs iron uptake (PubMed:9083054). Impairs the production of inositolphosphorylceramide D (PubMed:9323360). Leads to slow growth on ethanol (PubMed:7708696). Also leads to slow growth at neutral or alkaline pH (PubMed:14993228, PubMed:9520490).</text>
</comment>
<comment type="similarity">
    <text evidence="18">Belongs to the cation transport ATPase (P-type) (TC 3.A.3) family. Type IB subfamily.</text>
</comment>
<feature type="chain" id="PRO_0000046318" description="Copper-transporting ATPase">
    <location>
        <begin position="1"/>
        <end position="1004"/>
    </location>
</feature>
<feature type="topological domain" description="Cytoplasmic" evidence="3">
    <location>
        <begin position="1"/>
        <end position="262"/>
    </location>
</feature>
<feature type="transmembrane region" description="Helical" evidence="3">
    <location>
        <begin position="263"/>
        <end position="283"/>
    </location>
</feature>
<feature type="topological domain" description="Lumenal, vesicle" evidence="3">
    <location>
        <begin position="284"/>
        <end position="303"/>
    </location>
</feature>
<feature type="transmembrane region" description="Helical" evidence="3">
    <location>
        <begin position="304"/>
        <end position="324"/>
    </location>
</feature>
<feature type="topological domain" description="Cytoplasmic" evidence="3">
    <location>
        <begin position="325"/>
        <end position="335"/>
    </location>
</feature>
<feature type="transmembrane region" description="Helical" evidence="3">
    <location>
        <begin position="336"/>
        <end position="356"/>
    </location>
</feature>
<feature type="topological domain" description="Lumenal, vesicle" evidence="3">
    <location>
        <begin position="357"/>
        <end position="370"/>
    </location>
</feature>
<feature type="transmembrane region" description="Helical" evidence="3">
    <location>
        <begin position="371"/>
        <end position="391"/>
    </location>
</feature>
<feature type="topological domain" description="Cytoplasmic" evidence="3">
    <location>
        <begin position="392"/>
        <end position="528"/>
    </location>
</feature>
<feature type="transmembrane region" description="Helical" evidence="3">
    <location>
        <begin position="529"/>
        <end position="549"/>
    </location>
</feature>
<feature type="topological domain" description="Lumenal, vesicle" evidence="3">
    <location>
        <begin position="550"/>
        <end position="577"/>
    </location>
</feature>
<feature type="transmembrane region" description="Helical" evidence="3">
    <location>
        <begin position="578"/>
        <end position="598"/>
    </location>
</feature>
<feature type="topological domain" description="Cytoplasmic" evidence="3">
    <location>
        <begin position="599"/>
        <end position="901"/>
    </location>
</feature>
<feature type="transmembrane region" description="Helical" evidence="3">
    <location>
        <begin position="902"/>
        <end position="924"/>
    </location>
</feature>
<feature type="topological domain" description="Lumenal, vesicle" evidence="3">
    <location>
        <begin position="925"/>
        <end position="927"/>
    </location>
</feature>
<feature type="transmembrane region" description="Helical" evidence="3">
    <location>
        <begin position="928"/>
        <end position="950"/>
    </location>
</feature>
<feature type="topological domain" description="Cytoplasmic" evidence="3">
    <location>
        <begin position="951"/>
        <end position="1004"/>
    </location>
</feature>
<feature type="domain" description="HMA 1" evidence="4">
    <location>
        <begin position="2"/>
        <end position="67"/>
    </location>
</feature>
<feature type="domain" description="HMA 2" evidence="4">
    <location>
        <begin position="80"/>
        <end position="146"/>
    </location>
</feature>
<feature type="active site" description="4-aspartylphosphate intermediate" evidence="1">
    <location>
        <position position="627"/>
    </location>
</feature>
<feature type="binding site" evidence="4 5 20">
    <location>
        <position position="13"/>
    </location>
    <ligand>
        <name>Cu(+)</name>
        <dbReference type="ChEBI" id="CHEBI:49552"/>
        <label>1</label>
    </ligand>
</feature>
<feature type="binding site" evidence="4 5 20">
    <location>
        <position position="16"/>
    </location>
    <ligand>
        <name>Cu(+)</name>
        <dbReference type="ChEBI" id="CHEBI:49552"/>
        <label>1</label>
    </ligand>
</feature>
<feature type="binding site" evidence="4">
    <location>
        <position position="91"/>
    </location>
    <ligand>
        <name>Cu(+)</name>
        <dbReference type="ChEBI" id="CHEBI:49552"/>
        <label>2</label>
    </ligand>
</feature>
<feature type="binding site" evidence="4">
    <location>
        <position position="94"/>
    </location>
    <ligand>
        <name>Cu(+)</name>
        <dbReference type="ChEBI" id="CHEBI:49552"/>
        <label>2</label>
    </ligand>
</feature>
<feature type="binding site" evidence="18">
    <location>
        <position position="838"/>
    </location>
    <ligand>
        <name>Mg(2+)</name>
        <dbReference type="ChEBI" id="CHEBI:18420"/>
    </ligand>
</feature>
<feature type="binding site" evidence="18">
    <location>
        <position position="842"/>
    </location>
    <ligand>
        <name>Mg(2+)</name>
        <dbReference type="ChEBI" id="CHEBI:18420"/>
    </ligand>
</feature>
<feature type="strand" evidence="22">
    <location>
        <begin position="2"/>
        <end position="8"/>
    </location>
</feature>
<feature type="helix" evidence="22">
    <location>
        <begin position="14"/>
        <end position="25"/>
    </location>
</feature>
<feature type="strand" evidence="22">
    <location>
        <begin position="27"/>
        <end position="33"/>
    </location>
</feature>
<feature type="turn" evidence="22">
    <location>
        <begin position="37"/>
        <end position="40"/>
    </location>
</feature>
<feature type="strand" evidence="22">
    <location>
        <begin position="41"/>
        <end position="46"/>
    </location>
</feature>
<feature type="strand" evidence="23">
    <location>
        <begin position="48"/>
        <end position="50"/>
    </location>
</feature>
<feature type="helix" evidence="22">
    <location>
        <begin position="52"/>
        <end position="62"/>
    </location>
</feature>
<feature type="strand" evidence="22">
    <location>
        <begin position="66"/>
        <end position="70"/>
    </location>
</feature>
<keyword id="KW-0002">3D-structure</keyword>
<keyword id="KW-0067">ATP-binding</keyword>
<keyword id="KW-0186">Copper</keyword>
<keyword id="KW-0187">Copper transport</keyword>
<keyword id="KW-0333">Golgi apparatus</keyword>
<keyword id="KW-0406">Ion transport</keyword>
<keyword id="KW-0460">Magnesium</keyword>
<keyword id="KW-0472">Membrane</keyword>
<keyword id="KW-0479">Metal-binding</keyword>
<keyword id="KW-0547">Nucleotide-binding</keyword>
<keyword id="KW-1185">Reference proteome</keyword>
<keyword id="KW-0677">Repeat</keyword>
<keyword id="KW-1278">Translocase</keyword>
<keyword id="KW-0812">Transmembrane</keyword>
<keyword id="KW-1133">Transmembrane helix</keyword>
<keyword id="KW-0813">Transport</keyword>
<name>ATU2_YEAST</name>
<evidence type="ECO:0000250" key="1"/>
<evidence type="ECO:0000250" key="2">
    <source>
        <dbReference type="UniProtKB" id="Q04656"/>
    </source>
</evidence>
<evidence type="ECO:0000255" key="3"/>
<evidence type="ECO:0000255" key="4">
    <source>
        <dbReference type="PROSITE-ProRule" id="PRU00280"/>
    </source>
</evidence>
<evidence type="ECO:0000269" key="5">
    <source>
    </source>
</evidence>
<evidence type="ECO:0000269" key="6">
    <source>
    </source>
</evidence>
<evidence type="ECO:0000269" key="7">
    <source>
    </source>
</evidence>
<evidence type="ECO:0000269" key="8">
    <source>
    </source>
</evidence>
<evidence type="ECO:0000269" key="9">
    <source>
    </source>
</evidence>
<evidence type="ECO:0000269" key="10">
    <source>
    </source>
</evidence>
<evidence type="ECO:0000269" key="11">
    <source>
    </source>
</evidence>
<evidence type="ECO:0000269" key="12">
    <source>
    </source>
</evidence>
<evidence type="ECO:0000269" key="13">
    <source>
    </source>
</evidence>
<evidence type="ECO:0000269" key="14">
    <source>
    </source>
</evidence>
<evidence type="ECO:0000269" key="15">
    <source>
    </source>
</evidence>
<evidence type="ECO:0000269" key="16">
    <source>
    </source>
</evidence>
<evidence type="ECO:0000303" key="17">
    <source>
    </source>
</evidence>
<evidence type="ECO:0000305" key="18"/>
<evidence type="ECO:0007744" key="19">
    <source>
        <dbReference type="PDB" id="1FVQ"/>
    </source>
</evidence>
<evidence type="ECO:0007744" key="20">
    <source>
        <dbReference type="PDB" id="1FVS"/>
    </source>
</evidence>
<evidence type="ECO:0007744" key="21">
    <source>
        <dbReference type="PDB" id="2GGP"/>
    </source>
</evidence>
<evidence type="ECO:0007829" key="22">
    <source>
        <dbReference type="PDB" id="1FVQ"/>
    </source>
</evidence>
<evidence type="ECO:0007829" key="23">
    <source>
        <dbReference type="PDB" id="1FVS"/>
    </source>
</evidence>
<accession>P38995</accession>
<accession>D6VSQ3</accession>
<sequence>MREVILAVHGMTCSACTNTINTQLRALKGVTKCDISLVTNECQVTYDNEVTADSIKEIIEDCGFDCEILRDSEITAISTKEGLLSVQGMTCGSCVSTVTKQVEGIEGVESVVVSLVTEECHVIYEPSKTTLETAREMIEDCGFDSNIIMDGNGNADMTEKTVILKVTKAFEDESPLILSSVSERFQFLLDLGVKSIEISDDMHTLTIKYCCNELGIRDLLRHLERTGYKFTVFSNLDNTTQLRLLSKEDEIRFWKKNSIKSTLLAIICMLLYMIVPMMWPTIVQDRIFPYKETSFVRGLFYRDILGVILASYIQFSVGFYFYKAAWASLKHGSGTMDTLVCVSTTCAYTFSVFSLVHNMFHPSSTGKLPRIVFDTSIMIISYISIGKYLETLAKSQTSTALSKLIQLTPSVCSIISDVERNETKEIPIELLQVNDIVEIKPGMKIPADGIITRGESEIDESLMTGESILVPKKTGFPVIAGSVNGPGHFYFRTTTVGEETKLANIIKVMKEAQLSKAPIQGYADYLASIFVPGILILAVLTFFIWCFILNISANPPVAFTANTKADNFFICLQTATSVVIVACPCALGLATPTAIMVGTGVGAQNGVLIKGGEVLEKFNSITTFVFDKTGTLTTGFMVVKKFLKDSNWVGNVDEDEVLACIKATESISDHPVSKAIIRYCDGLNCNKALNAVVLESEYVLGKGIVSKCQVNGNTYDICIGNEALILEDALKKSGFINSNVDQGNTVSYVSVNGHVFGLFEINDEVKHDSYATVQYLQRNGYETYMITGDNNSAAKRVAREVGISFENVYSDVSPTGKCDLVKKIQDKEGNNKVAVVGDGINDAPALALSDLGIAISTGTEIAIEAADIVILCGNDLNTNSLRGLANAIDISLKTFKRIKLNLFWALCYNIFMIPIAMGVLIPWGITLPPMLAGLAMAFSSVSVVLSSLMLKKWTPPDIESHGISDFKSKFSIGNFWSRLFSTRAIAGEQDIESQAGLMSNEEVL</sequence>